<organism>
    <name type="scientific">Geobacter sp. (strain M21)</name>
    <dbReference type="NCBI Taxonomy" id="443144"/>
    <lineage>
        <taxon>Bacteria</taxon>
        <taxon>Pseudomonadati</taxon>
        <taxon>Thermodesulfobacteriota</taxon>
        <taxon>Desulfuromonadia</taxon>
        <taxon>Geobacterales</taxon>
        <taxon>Geobacteraceae</taxon>
        <taxon>Geobacter</taxon>
    </lineage>
</organism>
<dbReference type="EC" id="2.7.7.8" evidence="1"/>
<dbReference type="EMBL" id="CP001661">
    <property type="protein sequence ID" value="ACT19005.1"/>
    <property type="molecule type" value="Genomic_DNA"/>
</dbReference>
<dbReference type="SMR" id="C6E2P5"/>
<dbReference type="STRING" id="443144.GM21_2976"/>
<dbReference type="KEGG" id="gem:GM21_2976"/>
<dbReference type="eggNOG" id="COG1185">
    <property type="taxonomic scope" value="Bacteria"/>
</dbReference>
<dbReference type="HOGENOM" id="CLU_004217_2_2_7"/>
<dbReference type="OrthoDB" id="9804305at2"/>
<dbReference type="GO" id="GO:0005829">
    <property type="term" value="C:cytosol"/>
    <property type="evidence" value="ECO:0007669"/>
    <property type="project" value="TreeGrafter"/>
</dbReference>
<dbReference type="GO" id="GO:0000175">
    <property type="term" value="F:3'-5'-RNA exonuclease activity"/>
    <property type="evidence" value="ECO:0007669"/>
    <property type="project" value="TreeGrafter"/>
</dbReference>
<dbReference type="GO" id="GO:0000287">
    <property type="term" value="F:magnesium ion binding"/>
    <property type="evidence" value="ECO:0007669"/>
    <property type="project" value="UniProtKB-UniRule"/>
</dbReference>
<dbReference type="GO" id="GO:0004654">
    <property type="term" value="F:polyribonucleotide nucleotidyltransferase activity"/>
    <property type="evidence" value="ECO:0007669"/>
    <property type="project" value="UniProtKB-UniRule"/>
</dbReference>
<dbReference type="GO" id="GO:0003723">
    <property type="term" value="F:RNA binding"/>
    <property type="evidence" value="ECO:0007669"/>
    <property type="project" value="UniProtKB-UniRule"/>
</dbReference>
<dbReference type="GO" id="GO:0006402">
    <property type="term" value="P:mRNA catabolic process"/>
    <property type="evidence" value="ECO:0007669"/>
    <property type="project" value="UniProtKB-UniRule"/>
</dbReference>
<dbReference type="GO" id="GO:0006396">
    <property type="term" value="P:RNA processing"/>
    <property type="evidence" value="ECO:0007669"/>
    <property type="project" value="InterPro"/>
</dbReference>
<dbReference type="CDD" id="cd02393">
    <property type="entry name" value="KH-I_PNPase"/>
    <property type="match status" value="1"/>
</dbReference>
<dbReference type="CDD" id="cd11363">
    <property type="entry name" value="RNase_PH_PNPase_1"/>
    <property type="match status" value="1"/>
</dbReference>
<dbReference type="CDD" id="cd11364">
    <property type="entry name" value="RNase_PH_PNPase_2"/>
    <property type="match status" value="1"/>
</dbReference>
<dbReference type="CDD" id="cd04472">
    <property type="entry name" value="S1_PNPase"/>
    <property type="match status" value="1"/>
</dbReference>
<dbReference type="FunFam" id="2.40.50.140:FF:000023">
    <property type="entry name" value="Polyribonucleotide nucleotidyltransferase"/>
    <property type="match status" value="1"/>
</dbReference>
<dbReference type="FunFam" id="3.30.1370.10:FF:000001">
    <property type="entry name" value="Polyribonucleotide nucleotidyltransferase"/>
    <property type="match status" value="1"/>
</dbReference>
<dbReference type="FunFam" id="3.30.230.70:FF:000001">
    <property type="entry name" value="Polyribonucleotide nucleotidyltransferase"/>
    <property type="match status" value="1"/>
</dbReference>
<dbReference type="FunFam" id="3.30.230.70:FF:000002">
    <property type="entry name" value="Polyribonucleotide nucleotidyltransferase"/>
    <property type="match status" value="1"/>
</dbReference>
<dbReference type="Gene3D" id="3.30.230.70">
    <property type="entry name" value="GHMP Kinase, N-terminal domain"/>
    <property type="match status" value="2"/>
</dbReference>
<dbReference type="Gene3D" id="3.30.1370.10">
    <property type="entry name" value="K Homology domain, type 1"/>
    <property type="match status" value="1"/>
</dbReference>
<dbReference type="Gene3D" id="2.40.50.140">
    <property type="entry name" value="Nucleic acid-binding proteins"/>
    <property type="match status" value="1"/>
</dbReference>
<dbReference type="HAMAP" id="MF_01595">
    <property type="entry name" value="PNPase"/>
    <property type="match status" value="1"/>
</dbReference>
<dbReference type="InterPro" id="IPR001247">
    <property type="entry name" value="ExoRNase_PH_dom1"/>
</dbReference>
<dbReference type="InterPro" id="IPR015847">
    <property type="entry name" value="ExoRNase_PH_dom2"/>
</dbReference>
<dbReference type="InterPro" id="IPR036345">
    <property type="entry name" value="ExoRNase_PH_dom2_sf"/>
</dbReference>
<dbReference type="InterPro" id="IPR004087">
    <property type="entry name" value="KH_dom"/>
</dbReference>
<dbReference type="InterPro" id="IPR004088">
    <property type="entry name" value="KH_dom_type_1"/>
</dbReference>
<dbReference type="InterPro" id="IPR036612">
    <property type="entry name" value="KH_dom_type_1_sf"/>
</dbReference>
<dbReference type="InterPro" id="IPR012340">
    <property type="entry name" value="NA-bd_OB-fold"/>
</dbReference>
<dbReference type="InterPro" id="IPR012162">
    <property type="entry name" value="PNPase"/>
</dbReference>
<dbReference type="InterPro" id="IPR027408">
    <property type="entry name" value="PNPase/RNase_PH_dom_sf"/>
</dbReference>
<dbReference type="InterPro" id="IPR015848">
    <property type="entry name" value="PNPase_PH_RNA-bd_bac/org-type"/>
</dbReference>
<dbReference type="InterPro" id="IPR036456">
    <property type="entry name" value="PNPase_PH_RNA-bd_sf"/>
</dbReference>
<dbReference type="InterPro" id="IPR020568">
    <property type="entry name" value="Ribosomal_Su5_D2-typ_SF"/>
</dbReference>
<dbReference type="InterPro" id="IPR003029">
    <property type="entry name" value="S1_domain"/>
</dbReference>
<dbReference type="NCBIfam" id="TIGR03591">
    <property type="entry name" value="polynuc_phos"/>
    <property type="match status" value="1"/>
</dbReference>
<dbReference type="NCBIfam" id="NF008805">
    <property type="entry name" value="PRK11824.1"/>
    <property type="match status" value="1"/>
</dbReference>
<dbReference type="PANTHER" id="PTHR11252">
    <property type="entry name" value="POLYRIBONUCLEOTIDE NUCLEOTIDYLTRANSFERASE"/>
    <property type="match status" value="1"/>
</dbReference>
<dbReference type="PANTHER" id="PTHR11252:SF0">
    <property type="entry name" value="POLYRIBONUCLEOTIDE NUCLEOTIDYLTRANSFERASE 1, MITOCHONDRIAL"/>
    <property type="match status" value="1"/>
</dbReference>
<dbReference type="Pfam" id="PF00013">
    <property type="entry name" value="KH_1"/>
    <property type="match status" value="1"/>
</dbReference>
<dbReference type="Pfam" id="PF03726">
    <property type="entry name" value="PNPase"/>
    <property type="match status" value="1"/>
</dbReference>
<dbReference type="Pfam" id="PF01138">
    <property type="entry name" value="RNase_PH"/>
    <property type="match status" value="2"/>
</dbReference>
<dbReference type="Pfam" id="PF03725">
    <property type="entry name" value="RNase_PH_C"/>
    <property type="match status" value="2"/>
</dbReference>
<dbReference type="Pfam" id="PF00575">
    <property type="entry name" value="S1"/>
    <property type="match status" value="1"/>
</dbReference>
<dbReference type="PIRSF" id="PIRSF005499">
    <property type="entry name" value="PNPase"/>
    <property type="match status" value="1"/>
</dbReference>
<dbReference type="SMART" id="SM00322">
    <property type="entry name" value="KH"/>
    <property type="match status" value="1"/>
</dbReference>
<dbReference type="SMART" id="SM00316">
    <property type="entry name" value="S1"/>
    <property type="match status" value="1"/>
</dbReference>
<dbReference type="SUPFAM" id="SSF54791">
    <property type="entry name" value="Eukaryotic type KH-domain (KH-domain type I)"/>
    <property type="match status" value="1"/>
</dbReference>
<dbReference type="SUPFAM" id="SSF50249">
    <property type="entry name" value="Nucleic acid-binding proteins"/>
    <property type="match status" value="1"/>
</dbReference>
<dbReference type="SUPFAM" id="SSF46915">
    <property type="entry name" value="Polynucleotide phosphorylase/guanosine pentaphosphate synthase (PNPase/GPSI), domain 3"/>
    <property type="match status" value="1"/>
</dbReference>
<dbReference type="SUPFAM" id="SSF55666">
    <property type="entry name" value="Ribonuclease PH domain 2-like"/>
    <property type="match status" value="2"/>
</dbReference>
<dbReference type="SUPFAM" id="SSF54211">
    <property type="entry name" value="Ribosomal protein S5 domain 2-like"/>
    <property type="match status" value="2"/>
</dbReference>
<dbReference type="PROSITE" id="PS50084">
    <property type="entry name" value="KH_TYPE_1"/>
    <property type="match status" value="1"/>
</dbReference>
<dbReference type="PROSITE" id="PS50126">
    <property type="entry name" value="S1"/>
    <property type="match status" value="1"/>
</dbReference>
<accession>C6E2P5</accession>
<sequence length="696" mass="74536">MVHTVQAECCGKTITIETGKIAKQASGAVMIKSGDTMVLVTAVAMKSAKEGQGFFPLTVNYQEKAYAGGRIPGSFFKREGRPSDNETLTCRLIDRPIRPLFPEGFLNDTQVMATVVSADKDNDPAILSMIGASAALMVSDCPFAGPIAGVKVGRVNGAFIANPTAEELEKSDLEIVIAASQEAILMVEGSAAEVSENDLLEAIFFGHAAVQPILAAQLELAKKVGTPKRVILAPVVNEELKARVAALAKEGMKQAVRIKTKVERHLAIDAITAETVAALAAEFEGSEKEVKGFIEDLEYDLVREHIIKDGQRIDGRDTKTIRAISTEVSLLPRAHGSALFTRGETQSIVAATLGTSVDEQRIDSLYGDSRKKFMLHYNFPPYSVGETSFRLAPGRREIGHGMLAERALQQVLPKHDDFPYTIRIVSDITESNGSSSMATVCGGSLSMMDAGIPIKAPVAGIAMGLIKEGDDFAILSDILGDEDHLGDMDFKVAGTAEGVTALQMDIKIGGVTREIMSAALAQAKAGRIHILGEMAKTIAASRGDLSAFAPRITTIWVKVDKIRDVIGSGGKNIRSVTEATGVSIDIDDTGKINIASTNKEACDLAIKMIRNLTAEAEEGKLYMGTVKKIMEFGAFVEIFPGTDGLVHVSELDTERVKNVSDILKEGDKVLVKCIGIDKQGKIKLSRKEALGQTFTE</sequence>
<evidence type="ECO:0000255" key="1">
    <source>
        <dbReference type="HAMAP-Rule" id="MF_01595"/>
    </source>
</evidence>
<protein>
    <recommendedName>
        <fullName evidence="1">Polyribonucleotide nucleotidyltransferase</fullName>
        <ecNumber evidence="1">2.7.7.8</ecNumber>
    </recommendedName>
    <alternativeName>
        <fullName evidence="1">Polynucleotide phosphorylase</fullName>
        <shortName evidence="1">PNPase</shortName>
    </alternativeName>
</protein>
<keyword id="KW-0963">Cytoplasm</keyword>
<keyword id="KW-0460">Magnesium</keyword>
<keyword id="KW-0479">Metal-binding</keyword>
<keyword id="KW-0548">Nucleotidyltransferase</keyword>
<keyword id="KW-0694">RNA-binding</keyword>
<keyword id="KW-0808">Transferase</keyword>
<comment type="function">
    <text evidence="1">Involved in mRNA degradation. Catalyzes the phosphorolysis of single-stranded polyribonucleotides processively in the 3'- to 5'-direction.</text>
</comment>
<comment type="catalytic activity">
    <reaction evidence="1">
        <text>RNA(n+1) + phosphate = RNA(n) + a ribonucleoside 5'-diphosphate</text>
        <dbReference type="Rhea" id="RHEA:22096"/>
        <dbReference type="Rhea" id="RHEA-COMP:14527"/>
        <dbReference type="Rhea" id="RHEA-COMP:17342"/>
        <dbReference type="ChEBI" id="CHEBI:43474"/>
        <dbReference type="ChEBI" id="CHEBI:57930"/>
        <dbReference type="ChEBI" id="CHEBI:140395"/>
        <dbReference type="EC" id="2.7.7.8"/>
    </reaction>
</comment>
<comment type="cofactor">
    <cofactor evidence="1">
        <name>Mg(2+)</name>
        <dbReference type="ChEBI" id="CHEBI:18420"/>
    </cofactor>
</comment>
<comment type="subcellular location">
    <subcellularLocation>
        <location evidence="1">Cytoplasm</location>
    </subcellularLocation>
</comment>
<comment type="similarity">
    <text evidence="1">Belongs to the polyribonucleotide nucleotidyltransferase family.</text>
</comment>
<proteinExistence type="inferred from homology"/>
<name>PNP_GEOSM</name>
<reference key="1">
    <citation type="submission" date="2009-07" db="EMBL/GenBank/DDBJ databases">
        <title>Complete sequence of Geobacter sp. M21.</title>
        <authorList>
            <consortium name="US DOE Joint Genome Institute"/>
            <person name="Lucas S."/>
            <person name="Copeland A."/>
            <person name="Lapidus A."/>
            <person name="Glavina del Rio T."/>
            <person name="Dalin E."/>
            <person name="Tice H."/>
            <person name="Bruce D."/>
            <person name="Goodwin L."/>
            <person name="Pitluck S."/>
            <person name="Saunders E."/>
            <person name="Brettin T."/>
            <person name="Detter J.C."/>
            <person name="Han C."/>
            <person name="Larimer F."/>
            <person name="Land M."/>
            <person name="Hauser L."/>
            <person name="Kyrpides N."/>
            <person name="Ovchinnikova G."/>
            <person name="Lovley D."/>
        </authorList>
    </citation>
    <scope>NUCLEOTIDE SEQUENCE [LARGE SCALE GENOMIC DNA]</scope>
    <source>
        <strain>M21</strain>
    </source>
</reference>
<gene>
    <name evidence="1" type="primary">pnp</name>
    <name type="ordered locus">GM21_2976</name>
</gene>
<feature type="chain" id="PRO_1000215660" description="Polyribonucleotide nucleotidyltransferase">
    <location>
        <begin position="1"/>
        <end position="696"/>
    </location>
</feature>
<feature type="domain" description="KH" evidence="1">
    <location>
        <begin position="550"/>
        <end position="609"/>
    </location>
</feature>
<feature type="domain" description="S1 motif" evidence="1">
    <location>
        <begin position="619"/>
        <end position="687"/>
    </location>
</feature>
<feature type="binding site" evidence="1">
    <location>
        <position position="483"/>
    </location>
    <ligand>
        <name>Mg(2+)</name>
        <dbReference type="ChEBI" id="CHEBI:18420"/>
    </ligand>
</feature>
<feature type="binding site" evidence="1">
    <location>
        <position position="489"/>
    </location>
    <ligand>
        <name>Mg(2+)</name>
        <dbReference type="ChEBI" id="CHEBI:18420"/>
    </ligand>
</feature>